<protein>
    <recommendedName>
        <fullName evidence="1">Fumarate reductase subunit C</fullName>
    </recommendedName>
    <alternativeName>
        <fullName evidence="1">Quinol-fumarate reductase subunit C</fullName>
        <shortName evidence="1">QFR subunit C</shortName>
    </alternativeName>
</protein>
<name>FRDC_MYCTA</name>
<gene>
    <name evidence="1" type="primary">frdC</name>
    <name type="ordered locus">MRA_1566</name>
</gene>
<accession>A5U2R1</accession>
<evidence type="ECO:0000255" key="1">
    <source>
        <dbReference type="HAMAP-Rule" id="MF_00708"/>
    </source>
</evidence>
<sequence>MSAYRQPVERYWWARRRSYLRFMLREISCIFVAWFVLYLMLVLRAVGAGGNSYQRFLDFSANPVVVVLNVVALSFLLLHAVTWFGSAPRAMVIQVRGRRVPARAVLAGHYAAWLVVSVIVAWMVLS</sequence>
<proteinExistence type="inferred from homology"/>
<dbReference type="EMBL" id="CP000611">
    <property type="protein sequence ID" value="ABQ73311.1"/>
    <property type="molecule type" value="Genomic_DNA"/>
</dbReference>
<dbReference type="RefSeq" id="WP_003916859.1">
    <property type="nucleotide sequence ID" value="NZ_CP016972.1"/>
</dbReference>
<dbReference type="SMR" id="A5U2R1"/>
<dbReference type="KEGG" id="mra:MRA_1566"/>
<dbReference type="eggNOG" id="COG3029">
    <property type="taxonomic scope" value="Bacteria"/>
</dbReference>
<dbReference type="HOGENOM" id="CLU_156492_0_0_11"/>
<dbReference type="Proteomes" id="UP000001988">
    <property type="component" value="Chromosome"/>
</dbReference>
<dbReference type="GO" id="GO:0045283">
    <property type="term" value="C:fumarate reductase complex"/>
    <property type="evidence" value="ECO:0007669"/>
    <property type="project" value="UniProtKB-UniRule"/>
</dbReference>
<dbReference type="GO" id="GO:0005886">
    <property type="term" value="C:plasma membrane"/>
    <property type="evidence" value="ECO:0007669"/>
    <property type="project" value="UniProtKB-SubCell"/>
</dbReference>
<dbReference type="GO" id="GO:0000104">
    <property type="term" value="F:succinate dehydrogenase activity"/>
    <property type="evidence" value="ECO:0007669"/>
    <property type="project" value="UniProtKB-UniRule"/>
</dbReference>
<dbReference type="CDD" id="cd00546">
    <property type="entry name" value="QFR_TypeD_subunitC"/>
    <property type="match status" value="1"/>
</dbReference>
<dbReference type="Gene3D" id="1.20.1300.10">
    <property type="entry name" value="Fumarate reductase/succinate dehydrogenase, transmembrane subunit"/>
    <property type="match status" value="1"/>
</dbReference>
<dbReference type="HAMAP" id="MF_00708">
    <property type="entry name" value="Fumarate_red_C"/>
    <property type="match status" value="1"/>
</dbReference>
<dbReference type="InterPro" id="IPR003510">
    <property type="entry name" value="Fumarate_red_C"/>
</dbReference>
<dbReference type="InterPro" id="IPR034804">
    <property type="entry name" value="SQR/QFR_C/D"/>
</dbReference>
<dbReference type="NCBIfam" id="NF010126">
    <property type="entry name" value="PRK13603.1"/>
    <property type="match status" value="1"/>
</dbReference>
<dbReference type="Pfam" id="PF02300">
    <property type="entry name" value="Fumarate_red_C"/>
    <property type="match status" value="1"/>
</dbReference>
<dbReference type="PIRSF" id="PIRSF000180">
    <property type="entry name" value="FrdC"/>
    <property type="match status" value="1"/>
</dbReference>
<dbReference type="SUPFAM" id="SSF81343">
    <property type="entry name" value="Fumarate reductase respiratory complex transmembrane subunits"/>
    <property type="match status" value="1"/>
</dbReference>
<reference key="1">
    <citation type="journal article" date="2008" name="PLoS ONE">
        <title>Genetic basis of virulence attenuation revealed by comparative genomic analysis of Mycobacterium tuberculosis strain H37Ra versus H37Rv.</title>
        <authorList>
            <person name="Zheng H."/>
            <person name="Lu L."/>
            <person name="Wang B."/>
            <person name="Pu S."/>
            <person name="Zhang X."/>
            <person name="Zhu G."/>
            <person name="Shi W."/>
            <person name="Zhang L."/>
            <person name="Wang H."/>
            <person name="Wang S."/>
            <person name="Zhao G."/>
            <person name="Zhang Y."/>
        </authorList>
    </citation>
    <scope>NUCLEOTIDE SEQUENCE [LARGE SCALE GENOMIC DNA]</scope>
    <source>
        <strain>ATCC 25177 / H37Ra</strain>
    </source>
</reference>
<comment type="function">
    <text evidence="1">Anchors the catalytic components of the fumarate reductase complex to the cell membrane, binds quinones.</text>
</comment>
<comment type="subunit">
    <text evidence="1">Part of an enzyme complex containing four subunits: a flavoprotein (FrdA), an iron-sulfur protein (FrdB), and two hydrophobic anchor proteins (FrdC and FrdD).</text>
</comment>
<comment type="subcellular location">
    <subcellularLocation>
        <location evidence="1">Cell membrane</location>
        <topology evidence="1">Multi-pass membrane protein</topology>
    </subcellularLocation>
</comment>
<comment type="similarity">
    <text evidence="1">Belongs to the FrdC family.</text>
</comment>
<keyword id="KW-1003">Cell membrane</keyword>
<keyword id="KW-0472">Membrane</keyword>
<keyword id="KW-1185">Reference proteome</keyword>
<keyword id="KW-0812">Transmembrane</keyword>
<keyword id="KW-1133">Transmembrane helix</keyword>
<feature type="chain" id="PRO_1000045527" description="Fumarate reductase subunit C">
    <location>
        <begin position="1"/>
        <end position="126"/>
    </location>
</feature>
<feature type="transmembrane region" description="Helical" evidence="1">
    <location>
        <begin position="30"/>
        <end position="50"/>
    </location>
</feature>
<feature type="transmembrane region" description="Helical" evidence="1">
    <location>
        <begin position="64"/>
        <end position="84"/>
    </location>
</feature>
<feature type="transmembrane region" description="Helical" evidence="1">
    <location>
        <begin position="105"/>
        <end position="125"/>
    </location>
</feature>
<organism>
    <name type="scientific">Mycobacterium tuberculosis (strain ATCC 25177 / H37Ra)</name>
    <dbReference type="NCBI Taxonomy" id="419947"/>
    <lineage>
        <taxon>Bacteria</taxon>
        <taxon>Bacillati</taxon>
        <taxon>Actinomycetota</taxon>
        <taxon>Actinomycetes</taxon>
        <taxon>Mycobacteriales</taxon>
        <taxon>Mycobacteriaceae</taxon>
        <taxon>Mycobacterium</taxon>
        <taxon>Mycobacterium tuberculosis complex</taxon>
    </lineage>
</organism>